<gene>
    <name evidence="1" type="primary">metK</name>
    <name type="ordered locus">SaurJH9_1841</name>
</gene>
<organism>
    <name type="scientific">Staphylococcus aureus (strain JH9)</name>
    <dbReference type="NCBI Taxonomy" id="359786"/>
    <lineage>
        <taxon>Bacteria</taxon>
        <taxon>Bacillati</taxon>
        <taxon>Bacillota</taxon>
        <taxon>Bacilli</taxon>
        <taxon>Bacillales</taxon>
        <taxon>Staphylococcaceae</taxon>
        <taxon>Staphylococcus</taxon>
    </lineage>
</organism>
<evidence type="ECO:0000255" key="1">
    <source>
        <dbReference type="HAMAP-Rule" id="MF_00086"/>
    </source>
</evidence>
<accession>A5ITV6</accession>
<comment type="function">
    <text evidence="1">Catalyzes the formation of S-adenosylmethionine (AdoMet) from methionine and ATP. The overall synthetic reaction is composed of two sequential steps, AdoMet formation and the subsequent tripolyphosphate hydrolysis which occurs prior to release of AdoMet from the enzyme.</text>
</comment>
<comment type="catalytic activity">
    <reaction evidence="1">
        <text>L-methionine + ATP + H2O = S-adenosyl-L-methionine + phosphate + diphosphate</text>
        <dbReference type="Rhea" id="RHEA:21080"/>
        <dbReference type="ChEBI" id="CHEBI:15377"/>
        <dbReference type="ChEBI" id="CHEBI:30616"/>
        <dbReference type="ChEBI" id="CHEBI:33019"/>
        <dbReference type="ChEBI" id="CHEBI:43474"/>
        <dbReference type="ChEBI" id="CHEBI:57844"/>
        <dbReference type="ChEBI" id="CHEBI:59789"/>
        <dbReference type="EC" id="2.5.1.6"/>
    </reaction>
</comment>
<comment type="cofactor">
    <cofactor evidence="1">
        <name>Mg(2+)</name>
        <dbReference type="ChEBI" id="CHEBI:18420"/>
    </cofactor>
    <text evidence="1">Binds 2 divalent ions per subunit.</text>
</comment>
<comment type="cofactor">
    <cofactor evidence="1">
        <name>K(+)</name>
        <dbReference type="ChEBI" id="CHEBI:29103"/>
    </cofactor>
    <text evidence="1">Binds 1 potassium ion per subunit.</text>
</comment>
<comment type="pathway">
    <text evidence="1">Amino-acid biosynthesis; S-adenosyl-L-methionine biosynthesis; S-adenosyl-L-methionine from L-methionine: step 1/1.</text>
</comment>
<comment type="subunit">
    <text evidence="1">Homotetramer; dimer of dimers.</text>
</comment>
<comment type="subcellular location">
    <subcellularLocation>
        <location evidence="1">Cytoplasm</location>
    </subcellularLocation>
</comment>
<comment type="similarity">
    <text evidence="1">Belongs to the AdoMet synthase family.</text>
</comment>
<protein>
    <recommendedName>
        <fullName evidence="1">S-adenosylmethionine synthase</fullName>
        <shortName evidence="1">AdoMet synthase</shortName>
        <ecNumber evidence="1">2.5.1.6</ecNumber>
    </recommendedName>
    <alternativeName>
        <fullName evidence="1">MAT</fullName>
    </alternativeName>
    <alternativeName>
        <fullName evidence="1">Methionine adenosyltransferase</fullName>
    </alternativeName>
</protein>
<keyword id="KW-0067">ATP-binding</keyword>
<keyword id="KW-0963">Cytoplasm</keyword>
<keyword id="KW-0460">Magnesium</keyword>
<keyword id="KW-0479">Metal-binding</keyword>
<keyword id="KW-0547">Nucleotide-binding</keyword>
<keyword id="KW-0554">One-carbon metabolism</keyword>
<keyword id="KW-0630">Potassium</keyword>
<keyword id="KW-0808">Transferase</keyword>
<dbReference type="EC" id="2.5.1.6" evidence="1"/>
<dbReference type="EMBL" id="CP000703">
    <property type="protein sequence ID" value="ABQ49629.1"/>
    <property type="molecule type" value="Genomic_DNA"/>
</dbReference>
<dbReference type="RefSeq" id="WP_000933820.1">
    <property type="nucleotide sequence ID" value="NC_009487.1"/>
</dbReference>
<dbReference type="SMR" id="A5ITV6"/>
<dbReference type="KEGG" id="saj:SaurJH9_1841"/>
<dbReference type="HOGENOM" id="CLU_041802_1_1_9"/>
<dbReference type="UniPathway" id="UPA00315">
    <property type="reaction ID" value="UER00080"/>
</dbReference>
<dbReference type="GO" id="GO:0005737">
    <property type="term" value="C:cytoplasm"/>
    <property type="evidence" value="ECO:0007669"/>
    <property type="project" value="UniProtKB-SubCell"/>
</dbReference>
<dbReference type="GO" id="GO:0005524">
    <property type="term" value="F:ATP binding"/>
    <property type="evidence" value="ECO:0007669"/>
    <property type="project" value="UniProtKB-UniRule"/>
</dbReference>
<dbReference type="GO" id="GO:0000287">
    <property type="term" value="F:magnesium ion binding"/>
    <property type="evidence" value="ECO:0007669"/>
    <property type="project" value="UniProtKB-UniRule"/>
</dbReference>
<dbReference type="GO" id="GO:0004478">
    <property type="term" value="F:methionine adenosyltransferase activity"/>
    <property type="evidence" value="ECO:0007669"/>
    <property type="project" value="UniProtKB-UniRule"/>
</dbReference>
<dbReference type="GO" id="GO:0006730">
    <property type="term" value="P:one-carbon metabolic process"/>
    <property type="evidence" value="ECO:0007669"/>
    <property type="project" value="UniProtKB-KW"/>
</dbReference>
<dbReference type="GO" id="GO:0006556">
    <property type="term" value="P:S-adenosylmethionine biosynthetic process"/>
    <property type="evidence" value="ECO:0007669"/>
    <property type="project" value="UniProtKB-UniRule"/>
</dbReference>
<dbReference type="CDD" id="cd18079">
    <property type="entry name" value="S-AdoMet_synt"/>
    <property type="match status" value="1"/>
</dbReference>
<dbReference type="FunFam" id="3.30.300.10:FF:000003">
    <property type="entry name" value="S-adenosylmethionine synthase"/>
    <property type="match status" value="1"/>
</dbReference>
<dbReference type="FunFam" id="3.30.300.10:FF:000004">
    <property type="entry name" value="S-adenosylmethionine synthase"/>
    <property type="match status" value="1"/>
</dbReference>
<dbReference type="Gene3D" id="3.30.300.10">
    <property type="match status" value="3"/>
</dbReference>
<dbReference type="HAMAP" id="MF_00086">
    <property type="entry name" value="S_AdoMet_synth1"/>
    <property type="match status" value="1"/>
</dbReference>
<dbReference type="InterPro" id="IPR022631">
    <property type="entry name" value="ADOMET_SYNTHASE_CS"/>
</dbReference>
<dbReference type="InterPro" id="IPR022630">
    <property type="entry name" value="S-AdoMet_synt_C"/>
</dbReference>
<dbReference type="InterPro" id="IPR022629">
    <property type="entry name" value="S-AdoMet_synt_central"/>
</dbReference>
<dbReference type="InterPro" id="IPR022628">
    <property type="entry name" value="S-AdoMet_synt_N"/>
</dbReference>
<dbReference type="InterPro" id="IPR002133">
    <property type="entry name" value="S-AdoMet_synthetase"/>
</dbReference>
<dbReference type="InterPro" id="IPR022636">
    <property type="entry name" value="S-AdoMet_synthetase_sfam"/>
</dbReference>
<dbReference type="NCBIfam" id="TIGR01034">
    <property type="entry name" value="metK"/>
    <property type="match status" value="1"/>
</dbReference>
<dbReference type="PANTHER" id="PTHR11964">
    <property type="entry name" value="S-ADENOSYLMETHIONINE SYNTHETASE"/>
    <property type="match status" value="1"/>
</dbReference>
<dbReference type="Pfam" id="PF02773">
    <property type="entry name" value="S-AdoMet_synt_C"/>
    <property type="match status" value="1"/>
</dbReference>
<dbReference type="Pfam" id="PF02772">
    <property type="entry name" value="S-AdoMet_synt_M"/>
    <property type="match status" value="1"/>
</dbReference>
<dbReference type="Pfam" id="PF00438">
    <property type="entry name" value="S-AdoMet_synt_N"/>
    <property type="match status" value="1"/>
</dbReference>
<dbReference type="PIRSF" id="PIRSF000497">
    <property type="entry name" value="MAT"/>
    <property type="match status" value="1"/>
</dbReference>
<dbReference type="SUPFAM" id="SSF55973">
    <property type="entry name" value="S-adenosylmethionine synthetase"/>
    <property type="match status" value="3"/>
</dbReference>
<dbReference type="PROSITE" id="PS00376">
    <property type="entry name" value="ADOMET_SYNTHASE_1"/>
    <property type="match status" value="1"/>
</dbReference>
<dbReference type="PROSITE" id="PS00377">
    <property type="entry name" value="ADOMET_SYNTHASE_2"/>
    <property type="match status" value="1"/>
</dbReference>
<feature type="chain" id="PRO_1000075397" description="S-adenosylmethionine synthase">
    <location>
        <begin position="1"/>
        <end position="398"/>
    </location>
</feature>
<feature type="region of interest" description="Flexible loop" evidence="1">
    <location>
        <begin position="101"/>
        <end position="111"/>
    </location>
</feature>
<feature type="binding site" description="in other chain" evidence="1">
    <location>
        <position position="17"/>
    </location>
    <ligand>
        <name>ATP</name>
        <dbReference type="ChEBI" id="CHEBI:30616"/>
        <note>ligand shared between two neighboring subunits</note>
    </ligand>
</feature>
<feature type="binding site" evidence="1">
    <location>
        <position position="19"/>
    </location>
    <ligand>
        <name>Mg(2+)</name>
        <dbReference type="ChEBI" id="CHEBI:18420"/>
    </ligand>
</feature>
<feature type="binding site" evidence="1">
    <location>
        <position position="45"/>
    </location>
    <ligand>
        <name>K(+)</name>
        <dbReference type="ChEBI" id="CHEBI:29103"/>
    </ligand>
</feature>
<feature type="binding site" description="in other chain" evidence="1">
    <location>
        <position position="58"/>
    </location>
    <ligand>
        <name>L-methionine</name>
        <dbReference type="ChEBI" id="CHEBI:57844"/>
        <note>ligand shared between two neighboring subunits</note>
    </ligand>
</feature>
<feature type="binding site" description="in other chain" evidence="1">
    <location>
        <position position="101"/>
    </location>
    <ligand>
        <name>L-methionine</name>
        <dbReference type="ChEBI" id="CHEBI:57844"/>
        <note>ligand shared between two neighboring subunits</note>
    </ligand>
</feature>
<feature type="binding site" description="in other chain" evidence="1">
    <location>
        <begin position="176"/>
        <end position="178"/>
    </location>
    <ligand>
        <name>ATP</name>
        <dbReference type="ChEBI" id="CHEBI:30616"/>
        <note>ligand shared between two neighboring subunits</note>
    </ligand>
</feature>
<feature type="binding site" description="in other chain" evidence="1">
    <location>
        <begin position="243"/>
        <end position="244"/>
    </location>
    <ligand>
        <name>ATP</name>
        <dbReference type="ChEBI" id="CHEBI:30616"/>
        <note>ligand shared between two neighboring subunits</note>
    </ligand>
</feature>
<feature type="binding site" evidence="1">
    <location>
        <position position="252"/>
    </location>
    <ligand>
        <name>ATP</name>
        <dbReference type="ChEBI" id="CHEBI:30616"/>
        <note>ligand shared between two neighboring subunits</note>
    </ligand>
</feature>
<feature type="binding site" evidence="1">
    <location>
        <position position="252"/>
    </location>
    <ligand>
        <name>L-methionine</name>
        <dbReference type="ChEBI" id="CHEBI:57844"/>
        <note>ligand shared between two neighboring subunits</note>
    </ligand>
</feature>
<feature type="binding site" description="in other chain" evidence="1">
    <location>
        <begin position="258"/>
        <end position="259"/>
    </location>
    <ligand>
        <name>ATP</name>
        <dbReference type="ChEBI" id="CHEBI:30616"/>
        <note>ligand shared between two neighboring subunits</note>
    </ligand>
</feature>
<feature type="binding site" evidence="1">
    <location>
        <position position="279"/>
    </location>
    <ligand>
        <name>ATP</name>
        <dbReference type="ChEBI" id="CHEBI:30616"/>
        <note>ligand shared between two neighboring subunits</note>
    </ligand>
</feature>
<feature type="binding site" description="in other chain" evidence="1">
    <location>
        <position position="283"/>
    </location>
    <ligand>
        <name>L-methionine</name>
        <dbReference type="ChEBI" id="CHEBI:57844"/>
        <note>ligand shared between two neighboring subunits</note>
    </ligand>
</feature>
<proteinExistence type="inferred from homology"/>
<name>METK_STAA9</name>
<sequence>MLNNKRLFTSESVTEGHPDKIADQVSDAILDAILKDDPNARVACETTVTTGMALIAGEISTTTYVDIPKVVRETIKEIGYTRAKYGYDYETMAILTAIDEQSPDIAQGVDKALEYRDKDSEEEIEATGAGDQGLMFGYATNETETYMPLAIYLSHQLAKRLSDVRKDGTLNYLRPDGKVQVTVEYDENDNPVRIDTIVVSTQHADDVTLEQIQEDIKAHVIYPTVPENLINEQTKFYINPTGRFVIGGPQGDAGLTGRKIIVDTYGGYARHGGGCFSGKDPTKVDRSAAYAARYVAKNIVAAGLADQCEVQLAYAIGVAEPVSIAIDTFGTGKVSEGQLVEAVRKHFDLRPAGIIKMLDLKQPIYKQTAAYGHFGRTDVLFPWEKLDKVEELKDAVKY</sequence>
<reference key="1">
    <citation type="submission" date="2007-05" db="EMBL/GenBank/DDBJ databases">
        <title>Complete sequence of chromosome of Staphylococcus aureus subsp. aureus JH9.</title>
        <authorList>
            <consortium name="US DOE Joint Genome Institute"/>
            <person name="Copeland A."/>
            <person name="Lucas S."/>
            <person name="Lapidus A."/>
            <person name="Barry K."/>
            <person name="Detter J.C."/>
            <person name="Glavina del Rio T."/>
            <person name="Hammon N."/>
            <person name="Israni S."/>
            <person name="Pitluck S."/>
            <person name="Chain P."/>
            <person name="Malfatti S."/>
            <person name="Shin M."/>
            <person name="Vergez L."/>
            <person name="Schmutz J."/>
            <person name="Larimer F."/>
            <person name="Land M."/>
            <person name="Hauser L."/>
            <person name="Kyrpides N."/>
            <person name="Kim E."/>
            <person name="Tomasz A."/>
            <person name="Richardson P."/>
        </authorList>
    </citation>
    <scope>NUCLEOTIDE SEQUENCE [LARGE SCALE GENOMIC DNA]</scope>
    <source>
        <strain>JH9</strain>
    </source>
</reference>